<proteinExistence type="inferred from homology"/>
<accession>P35994</accession>
<accession>D6VWY0</accession>
<name>PAU16_YEAST</name>
<reference key="1">
    <citation type="journal article" date="1994" name="Yeast">
        <title>Sequencing of a 13.2 kb segment next to the left telomere of yeast chromosome XI revealed five open reading frames and recent recombination events with the right arms of chromosomes III and V.</title>
        <authorList>
            <person name="Alexandraki D."/>
            <person name="Tzermia M."/>
        </authorList>
    </citation>
    <scope>NUCLEOTIDE SEQUENCE [GENOMIC DNA]</scope>
</reference>
<reference key="2">
    <citation type="journal article" date="1994" name="Nature">
        <title>Complete DNA sequence of yeast chromosome XI.</title>
        <authorList>
            <person name="Dujon B."/>
            <person name="Alexandraki D."/>
            <person name="Andre B."/>
            <person name="Ansorge W."/>
            <person name="Baladron V."/>
            <person name="Ballesta J.P.G."/>
            <person name="Banrevi A."/>
            <person name="Bolle P.-A."/>
            <person name="Bolotin-Fukuhara M."/>
            <person name="Bossier P."/>
            <person name="Bou G."/>
            <person name="Boyer J."/>
            <person name="Buitrago M.J."/>
            <person name="Cheret G."/>
            <person name="Colleaux L."/>
            <person name="Daignan-Fornier B."/>
            <person name="del Rey F."/>
            <person name="Dion C."/>
            <person name="Domdey H."/>
            <person name="Duesterhoeft A."/>
            <person name="Duesterhus S."/>
            <person name="Entian K.-D."/>
            <person name="Erfle H."/>
            <person name="Esteban P.F."/>
            <person name="Feldmann H."/>
            <person name="Fernandes L."/>
            <person name="Fobo G.M."/>
            <person name="Fritz C."/>
            <person name="Fukuhara H."/>
            <person name="Gabel C."/>
            <person name="Gaillon L."/>
            <person name="Garcia-Cantalejo J.M."/>
            <person name="Garcia-Ramirez J.J."/>
            <person name="Gent M.E."/>
            <person name="Ghazvini M."/>
            <person name="Goffeau A."/>
            <person name="Gonzalez A."/>
            <person name="Grothues D."/>
            <person name="Guerreiro P."/>
            <person name="Hegemann J.H."/>
            <person name="Hewitt N."/>
            <person name="Hilger F."/>
            <person name="Hollenberg C.P."/>
            <person name="Horaitis O."/>
            <person name="Indge K.J."/>
            <person name="Jacquier A."/>
            <person name="James C.M."/>
            <person name="Jauniaux J.-C."/>
            <person name="Jimenez A."/>
            <person name="Keuchel H."/>
            <person name="Kirchrath L."/>
            <person name="Kleine K."/>
            <person name="Koetter P."/>
            <person name="Legrain P."/>
            <person name="Liebl S."/>
            <person name="Louis E.J."/>
            <person name="Maia e Silva A."/>
            <person name="Marck C."/>
            <person name="Monnier A.-L."/>
            <person name="Moestl D."/>
            <person name="Mueller S."/>
            <person name="Obermaier B."/>
            <person name="Oliver S.G."/>
            <person name="Pallier C."/>
            <person name="Pascolo S."/>
            <person name="Pfeiffer F."/>
            <person name="Philippsen P."/>
            <person name="Planta R.J."/>
            <person name="Pohl F.M."/>
            <person name="Pohl T.M."/>
            <person name="Poehlmann R."/>
            <person name="Portetelle D."/>
            <person name="Purnelle B."/>
            <person name="Puzos V."/>
            <person name="Ramezani Rad M."/>
            <person name="Rasmussen S.W."/>
            <person name="Remacha M.A."/>
            <person name="Revuelta J.L."/>
            <person name="Richard G.-F."/>
            <person name="Rieger M."/>
            <person name="Rodrigues-Pousada C."/>
            <person name="Rose M."/>
            <person name="Rupp T."/>
            <person name="Santos M.A."/>
            <person name="Schwager C."/>
            <person name="Sensen C."/>
            <person name="Skala J."/>
            <person name="Soares H."/>
            <person name="Sor F."/>
            <person name="Stegemann J."/>
            <person name="Tettelin H."/>
            <person name="Thierry A."/>
            <person name="Tzermia M."/>
            <person name="Urrestarazu L.A."/>
            <person name="van Dyck L."/>
            <person name="van Vliet-Reedijk J.C."/>
            <person name="Valens M."/>
            <person name="Vandenbol M."/>
            <person name="Vilela C."/>
            <person name="Vissers S."/>
            <person name="von Wettstein D."/>
            <person name="Voss H."/>
            <person name="Wiemann S."/>
            <person name="Xu G."/>
            <person name="Zimmermann J."/>
            <person name="Haasemann M."/>
            <person name="Becker I."/>
            <person name="Mewes H.-W."/>
        </authorList>
    </citation>
    <scope>NUCLEOTIDE SEQUENCE [LARGE SCALE GENOMIC DNA]</scope>
    <source>
        <strain>ATCC 204508 / S288c</strain>
    </source>
</reference>
<reference key="3">
    <citation type="journal article" date="2014" name="G3 (Bethesda)">
        <title>The reference genome sequence of Saccharomyces cerevisiae: Then and now.</title>
        <authorList>
            <person name="Engel S.R."/>
            <person name="Dietrich F.S."/>
            <person name="Fisk D.G."/>
            <person name="Binkley G."/>
            <person name="Balakrishnan R."/>
            <person name="Costanzo M.C."/>
            <person name="Dwight S.S."/>
            <person name="Hitz B.C."/>
            <person name="Karra K."/>
            <person name="Nash R.S."/>
            <person name="Weng S."/>
            <person name="Wong E.D."/>
            <person name="Lloyd P."/>
            <person name="Skrzypek M.S."/>
            <person name="Miyasato S.R."/>
            <person name="Simison M."/>
            <person name="Cherry J.M."/>
        </authorList>
    </citation>
    <scope>GENOME REANNOTATION</scope>
    <source>
        <strain>ATCC 204508 / S288c</strain>
    </source>
</reference>
<dbReference type="EMBL" id="X75950">
    <property type="protein sequence ID" value="CAA53549.1"/>
    <property type="molecule type" value="Genomic_DNA"/>
</dbReference>
<dbReference type="EMBL" id="Z28224">
    <property type="protein sequence ID" value="CAA82069.1"/>
    <property type="molecule type" value="Genomic_DNA"/>
</dbReference>
<dbReference type="EMBL" id="BK006944">
    <property type="protein sequence ID" value="DAA08946.1"/>
    <property type="molecule type" value="Genomic_DNA"/>
</dbReference>
<dbReference type="RefSeq" id="NP_012698.1">
    <property type="nucleotide sequence ID" value="NM_001179789.1"/>
</dbReference>
<dbReference type="BioGRID" id="33942">
    <property type="interactions" value="41"/>
</dbReference>
<dbReference type="DIP" id="DIP-4834N"/>
<dbReference type="FunCoup" id="P35994">
    <property type="interactions" value="47"/>
</dbReference>
<dbReference type="STRING" id="4932.YKL224C"/>
<dbReference type="PaxDb" id="4932-YKL224C"/>
<dbReference type="EnsemblFungi" id="YKL224C_mRNA">
    <property type="protein sequence ID" value="YKL224C"/>
    <property type="gene ID" value="YKL224C"/>
</dbReference>
<dbReference type="GeneID" id="853656"/>
<dbReference type="KEGG" id="sce:YKL224C"/>
<dbReference type="AGR" id="SGD:S000001707"/>
<dbReference type="SGD" id="S000001707">
    <property type="gene designation" value="PAU16"/>
</dbReference>
<dbReference type="VEuPathDB" id="FungiDB:YKL224C"/>
<dbReference type="eggNOG" id="ENOG502SR1B">
    <property type="taxonomic scope" value="Eukaryota"/>
</dbReference>
<dbReference type="GeneTree" id="ENSGT00940000176276"/>
<dbReference type="HOGENOM" id="CLU_136376_0_0_1"/>
<dbReference type="InParanoid" id="P35994"/>
<dbReference type="OrthoDB" id="4058359at2759"/>
<dbReference type="BioCyc" id="YEAST:G3O-31978-MONOMER"/>
<dbReference type="PRO" id="PR:P35994"/>
<dbReference type="Proteomes" id="UP000002311">
    <property type="component" value="Chromosome XI"/>
</dbReference>
<dbReference type="RNAct" id="P35994">
    <property type="molecule type" value="protein"/>
</dbReference>
<dbReference type="GO" id="GO:0009277">
    <property type="term" value="C:fungal-type cell wall"/>
    <property type="evidence" value="ECO:0000318"/>
    <property type="project" value="GO_Central"/>
</dbReference>
<dbReference type="GO" id="GO:0000324">
    <property type="term" value="C:fungal-type vacuole"/>
    <property type="evidence" value="ECO:0007005"/>
    <property type="project" value="SGD"/>
</dbReference>
<dbReference type="GO" id="GO:0005199">
    <property type="term" value="F:structural constituent of cell wall"/>
    <property type="evidence" value="ECO:0000318"/>
    <property type="project" value="GO_Central"/>
</dbReference>
<dbReference type="GO" id="GO:0031505">
    <property type="term" value="P:fungal-type cell wall organization"/>
    <property type="evidence" value="ECO:0000318"/>
    <property type="project" value="GO_Central"/>
</dbReference>
<dbReference type="InterPro" id="IPR000992">
    <property type="entry name" value="SRP1_TIP1"/>
</dbReference>
<dbReference type="InterPro" id="IPR050788">
    <property type="entry name" value="Yeast_SRP1/TIP1_CWP"/>
</dbReference>
<dbReference type="PANTHER" id="PTHR31002:SF34">
    <property type="entry name" value="CELL WALL PROTEIN CWP1-RELATED"/>
    <property type="match status" value="1"/>
</dbReference>
<dbReference type="PANTHER" id="PTHR31002">
    <property type="entry name" value="SERIPAUPERIN"/>
    <property type="match status" value="1"/>
</dbReference>
<dbReference type="Pfam" id="PF00660">
    <property type="entry name" value="SRP1_TIP1"/>
    <property type="match status" value="1"/>
</dbReference>
<dbReference type="PROSITE" id="PS00724">
    <property type="entry name" value="SRP1_TIP1"/>
    <property type="match status" value="1"/>
</dbReference>
<organism>
    <name type="scientific">Saccharomyces cerevisiae (strain ATCC 204508 / S288c)</name>
    <name type="common">Baker's yeast</name>
    <dbReference type="NCBI Taxonomy" id="559292"/>
    <lineage>
        <taxon>Eukaryota</taxon>
        <taxon>Fungi</taxon>
        <taxon>Dikarya</taxon>
        <taxon>Ascomycota</taxon>
        <taxon>Saccharomycotina</taxon>
        <taxon>Saccharomycetes</taxon>
        <taxon>Saccharomycetales</taxon>
        <taxon>Saccharomycetaceae</taxon>
        <taxon>Saccharomyces</taxon>
    </lineage>
</organism>
<protein>
    <recommendedName>
        <fullName>Seripauperin-16</fullName>
    </recommendedName>
</protein>
<keyword id="KW-1185">Reference proteome</keyword>
<keyword id="KW-0732">Signal</keyword>
<gene>
    <name type="primary">PAU16</name>
    <name type="ordered locus">YKL224C</name>
</gene>
<feature type="signal peptide" evidence="1">
    <location>
        <begin position="1"/>
        <end position="20"/>
    </location>
</feature>
<feature type="chain" id="PRO_0000033247" description="Seripauperin-16">
    <location>
        <begin position="21"/>
        <end position="123"/>
    </location>
</feature>
<comment type="similarity">
    <text evidence="2">Belongs to the SRP1/TIP1 family. Seripauperin subfamily.</text>
</comment>
<sequence>MVKLTSIAAGVAAIAAGVAAAPATTTLSPSDERVNLVELGVYVSDIRAHLAQYYLFQAAHPSETYPVEIAEAVFNYGDFTTMLTGIPAEQVTRVITGVPWYSTRLRPAISSALSKDGIYTIAN</sequence>
<evidence type="ECO:0000255" key="1"/>
<evidence type="ECO:0000305" key="2"/>